<keyword id="KW-1185">Reference proteome</keyword>
<feature type="chain" id="PRO_0000445372" description="Fusaristatin A biosynthesis cluster protein FGSG_08206">
    <location>
        <begin position="1"/>
        <end position="138"/>
    </location>
</feature>
<feature type="domain" description="Stress-response A/B barrel" evidence="1">
    <location>
        <begin position="33"/>
        <end position="130"/>
    </location>
</feature>
<organism>
    <name type="scientific">Gibberella zeae (strain ATCC MYA-4620 / CBS 123657 / FGSC 9075 / NRRL 31084 / PH-1)</name>
    <name type="common">Wheat head blight fungus</name>
    <name type="synonym">Fusarium graminearum</name>
    <dbReference type="NCBI Taxonomy" id="229533"/>
    <lineage>
        <taxon>Eukaryota</taxon>
        <taxon>Fungi</taxon>
        <taxon>Dikarya</taxon>
        <taxon>Ascomycota</taxon>
        <taxon>Pezizomycotina</taxon>
        <taxon>Sordariomycetes</taxon>
        <taxon>Hypocreomycetidae</taxon>
        <taxon>Hypocreales</taxon>
        <taxon>Nectriaceae</taxon>
        <taxon>Fusarium</taxon>
    </lineage>
</organism>
<name>FUSA4_GIBZE</name>
<gene>
    <name type="ORF">FGRAMPH1_01T09367</name>
    <name evidence="3" type="ORF">FGSG_08206</name>
</gene>
<protein>
    <recommendedName>
        <fullName evidence="3">Fusaristatin A biosynthesis cluster protein FGSG_08206</fullName>
    </recommendedName>
</protein>
<evidence type="ECO:0000255" key="1">
    <source>
        <dbReference type="PROSITE-ProRule" id="PRU00835"/>
    </source>
</evidence>
<evidence type="ECO:0000269" key="2">
    <source>
    </source>
</evidence>
<evidence type="ECO:0000303" key="3">
    <source>
    </source>
</evidence>
<evidence type="ECO:0000305" key="4">
    <source>
    </source>
</evidence>
<proteinExistence type="predicted"/>
<accession>I1RVD6</accession>
<sequence>MFAFKRSSCYFQVSNKIVKNGQIRGYISVADRVHRVTMFKMPKAEDQQRFLEQCRKMAADNQRNGSPYILSMVAGPAEDGPRTEGYTFVNKTEFASMEDMKYYETECPAHGEVKKVLGEITIDGMMTVFFKPQATGGA</sequence>
<dbReference type="EMBL" id="HG970333">
    <property type="protein sequence ID" value="CEF76486.1"/>
    <property type="molecule type" value="Genomic_DNA"/>
</dbReference>
<dbReference type="RefSeq" id="XP_011320601.1">
    <property type="nucleotide sequence ID" value="XM_011322299.1"/>
</dbReference>
<dbReference type="SMR" id="I1RVD6"/>
<dbReference type="GeneID" id="23555231"/>
<dbReference type="KEGG" id="fgr:FGSG_08206"/>
<dbReference type="VEuPathDB" id="FungiDB:FGRAMPH1_01G09367"/>
<dbReference type="eggNOG" id="ENOG502STNI">
    <property type="taxonomic scope" value="Eukaryota"/>
</dbReference>
<dbReference type="HOGENOM" id="CLU_120569_0_1_1"/>
<dbReference type="InParanoid" id="I1RVD6"/>
<dbReference type="OrthoDB" id="20896at110618"/>
<dbReference type="Proteomes" id="UP000070720">
    <property type="component" value="Chromosome 2"/>
</dbReference>
<dbReference type="Gene3D" id="3.30.70.100">
    <property type="match status" value="1"/>
</dbReference>
<dbReference type="InterPro" id="IPR013097">
    <property type="entry name" value="Dabb"/>
</dbReference>
<dbReference type="InterPro" id="IPR011008">
    <property type="entry name" value="Dimeric_a/b-barrel"/>
</dbReference>
<dbReference type="Pfam" id="PF07876">
    <property type="entry name" value="Dabb"/>
    <property type="match status" value="1"/>
</dbReference>
<dbReference type="SMART" id="SM00886">
    <property type="entry name" value="Dabb"/>
    <property type="match status" value="1"/>
</dbReference>
<dbReference type="SUPFAM" id="SSF54909">
    <property type="entry name" value="Dimeric alpha+beta barrel"/>
    <property type="match status" value="1"/>
</dbReference>
<dbReference type="PROSITE" id="PS51502">
    <property type="entry name" value="S_R_A_B_BARREL"/>
    <property type="match status" value="1"/>
</dbReference>
<comment type="function">
    <text evidence="2 4">Part of the gene cluster that mediates the biosynthesis of the lipopeptide fusaristatin A (PubMed:25412204). Fusaristatin A consists of a polyketide chain linked to three amino acid residues glutamine (Gln), dehydroalanine (dehydro-Ala), and beta-aminoisobutyric acid (PubMed:25412204). The biosynthesis starts with formation of a linear polyketide chain by the highly reducing polyketide synthase PKS6 (PubMed:25412204). The gene cluster does not contain an acyl-CoA ligase or an acyl-transferase, and it is therefore predicted that the polyketide is transferred directly to the nonribosomal peptide synthetase NRPS7 (Probable). Modules 1-3 from NRPS7 incorporate dehydro-Ala, Gln, and beta-aminoisobutyric acid in the compound, which is released by cyclization (PubMed:25412204). The beta-aminoisobutyric acid units are most likely not freely available to the NRPS, but can be synthesized from thymine, which requires a dehydrogenase, a monooxygenase, and an aminotransferase. The fusaristatin A cluster contains a cytochrome P450 monooxygenase (FGSG_08207) and an aminotransferase (FGSG_17085), which theoretically can perform two of the enzymatic steps (Probable). The enzymes may however also be involved in biosynthesis of dehydroalanine or modification of the polyketide (Probable). The dehydro-Ala residue can be a result of cyclization, where serine is dehydrated (Probable). The last gene of the cluster encodes a protein with an A/B barrel domain found in variable enzymes, which hampers functional prediction (Probable).</text>
</comment>
<comment type="pathway">
    <text evidence="4">Secondary metabolite biosynthesis.</text>
</comment>
<reference key="1">
    <citation type="journal article" date="2007" name="Science">
        <title>The Fusarium graminearum genome reveals a link between localized polymorphism and pathogen specialization.</title>
        <authorList>
            <person name="Cuomo C.A."/>
            <person name="Gueldener U."/>
            <person name="Xu J.-R."/>
            <person name="Trail F."/>
            <person name="Turgeon B.G."/>
            <person name="Di Pietro A."/>
            <person name="Walton J.D."/>
            <person name="Ma L.-J."/>
            <person name="Baker S.E."/>
            <person name="Rep M."/>
            <person name="Adam G."/>
            <person name="Antoniw J."/>
            <person name="Baldwin T."/>
            <person name="Calvo S.E."/>
            <person name="Chang Y.-L."/>
            <person name="DeCaprio D."/>
            <person name="Gale L.R."/>
            <person name="Gnerre S."/>
            <person name="Goswami R.S."/>
            <person name="Hammond-Kosack K."/>
            <person name="Harris L.J."/>
            <person name="Hilburn K."/>
            <person name="Kennell J.C."/>
            <person name="Kroken S."/>
            <person name="Magnuson J.K."/>
            <person name="Mannhaupt G."/>
            <person name="Mauceli E.W."/>
            <person name="Mewes H.-W."/>
            <person name="Mitterbauer R."/>
            <person name="Muehlbauer G."/>
            <person name="Muensterkoetter M."/>
            <person name="Nelson D."/>
            <person name="O'Donnell K."/>
            <person name="Ouellet T."/>
            <person name="Qi W."/>
            <person name="Quesneville H."/>
            <person name="Roncero M.I.G."/>
            <person name="Seong K.-Y."/>
            <person name="Tetko I.V."/>
            <person name="Urban M."/>
            <person name="Waalwijk C."/>
            <person name="Ward T.J."/>
            <person name="Yao J."/>
            <person name="Birren B.W."/>
            <person name="Kistler H.C."/>
        </authorList>
    </citation>
    <scope>NUCLEOTIDE SEQUENCE [LARGE SCALE GENOMIC DNA]</scope>
    <source>
        <strain>ATCC MYA-4620 / CBS 123657 / FGSC 9075 / NRRL 31084 / PH-1</strain>
    </source>
</reference>
<reference key="2">
    <citation type="journal article" date="2010" name="Nature">
        <title>Comparative genomics reveals mobile pathogenicity chromosomes in Fusarium.</title>
        <authorList>
            <person name="Ma L.-J."/>
            <person name="van der Does H.C."/>
            <person name="Borkovich K.A."/>
            <person name="Coleman J.J."/>
            <person name="Daboussi M.-J."/>
            <person name="Di Pietro A."/>
            <person name="Dufresne M."/>
            <person name="Freitag M."/>
            <person name="Grabherr M."/>
            <person name="Henrissat B."/>
            <person name="Houterman P.M."/>
            <person name="Kang S."/>
            <person name="Shim W.-B."/>
            <person name="Woloshuk C."/>
            <person name="Xie X."/>
            <person name="Xu J.-R."/>
            <person name="Antoniw J."/>
            <person name="Baker S.E."/>
            <person name="Bluhm B.H."/>
            <person name="Breakspear A."/>
            <person name="Brown D.W."/>
            <person name="Butchko R.A.E."/>
            <person name="Chapman S."/>
            <person name="Coulson R."/>
            <person name="Coutinho P.M."/>
            <person name="Danchin E.G.J."/>
            <person name="Diener A."/>
            <person name="Gale L.R."/>
            <person name="Gardiner D.M."/>
            <person name="Goff S."/>
            <person name="Hammond-Kosack K.E."/>
            <person name="Hilburn K."/>
            <person name="Hua-Van A."/>
            <person name="Jonkers W."/>
            <person name="Kazan K."/>
            <person name="Kodira C.D."/>
            <person name="Koehrsen M."/>
            <person name="Kumar L."/>
            <person name="Lee Y.-H."/>
            <person name="Li L."/>
            <person name="Manners J.M."/>
            <person name="Miranda-Saavedra D."/>
            <person name="Mukherjee M."/>
            <person name="Park G."/>
            <person name="Park J."/>
            <person name="Park S.-Y."/>
            <person name="Proctor R.H."/>
            <person name="Regev A."/>
            <person name="Ruiz-Roldan M.C."/>
            <person name="Sain D."/>
            <person name="Sakthikumar S."/>
            <person name="Sykes S."/>
            <person name="Schwartz D.C."/>
            <person name="Turgeon B.G."/>
            <person name="Wapinski I."/>
            <person name="Yoder O."/>
            <person name="Young S."/>
            <person name="Zeng Q."/>
            <person name="Zhou S."/>
            <person name="Galagan J."/>
            <person name="Cuomo C.A."/>
            <person name="Kistler H.C."/>
            <person name="Rep M."/>
        </authorList>
    </citation>
    <scope>GENOME REANNOTATION</scope>
    <source>
        <strain>ATCC MYA-4620 / CBS 123657 / FGSC 9075 / NRRL 31084 / PH-1</strain>
    </source>
</reference>
<reference key="3">
    <citation type="journal article" date="2015" name="BMC Genomics">
        <title>The completed genome sequence of the pathogenic ascomycete fungus Fusarium graminearum.</title>
        <authorList>
            <person name="King R."/>
            <person name="Urban M."/>
            <person name="Hammond-Kosack M.C.U."/>
            <person name="Hassani-Pak K."/>
            <person name="Hammond-Kosack K.E."/>
        </authorList>
    </citation>
    <scope>NUCLEOTIDE SEQUENCE [LARGE SCALE GENOMIC DNA]</scope>
    <source>
        <strain>ATCC MYA-4620 / CBS 123657 / FGSC 9075 / NRRL 31084 / PH-1</strain>
    </source>
</reference>
<reference key="4">
    <citation type="journal article" date="2014" name="J. Nat. Prod.">
        <title>Identification of the biosynthetic gene clusters for the lipopeptides fusaristatin A and W493 B in Fusarium graminearum and F. pseudograminearum.</title>
        <authorList>
            <person name="Soerensen J.L."/>
            <person name="Sondergaard T.E."/>
            <person name="Covarelli L."/>
            <person name="Fuertes P.R."/>
            <person name="Hansen F.T."/>
            <person name="Frandsen R.J."/>
            <person name="Saei W."/>
            <person name="Lukassen M.B."/>
            <person name="Wimmer R."/>
            <person name="Nielsen K.F."/>
            <person name="Gardiner D.M."/>
            <person name="Giese H."/>
        </authorList>
    </citation>
    <scope>IDENTIFICATION</scope>
    <scope>FUNCTION</scope>
    <scope>PATHWAY</scope>
</reference>